<feature type="chain" id="PRO_0000401083" description="23kDa protein">
    <location>
        <begin position="1"/>
        <end position="222"/>
    </location>
</feature>
<feature type="region of interest" description="Disordered" evidence="1">
    <location>
        <begin position="1"/>
        <end position="21"/>
    </location>
</feature>
<feature type="compositionally biased region" description="Polar residues" evidence="1">
    <location>
        <begin position="1"/>
        <end position="12"/>
    </location>
</feature>
<organism>
    <name type="scientific">Indian citrus ringspot virus (isolate Kinnow mandarin/India/K1/1996)</name>
    <name type="common">ICRSV</name>
    <dbReference type="NCBI Taxonomy" id="651357"/>
    <lineage>
        <taxon>Viruses</taxon>
        <taxon>Riboviria</taxon>
        <taxon>Orthornavirae</taxon>
        <taxon>Kitrinoviricota</taxon>
        <taxon>Alsuviricetes</taxon>
        <taxon>Tymovirales</taxon>
        <taxon>Alphaflexiviridae</taxon>
        <taxon>Potexvirus</taxon>
        <taxon>Mandarivirus</taxon>
        <taxon>Indian citrus ringspot virus</taxon>
    </lineage>
</organism>
<keyword id="KW-1185">Reference proteome</keyword>
<sequence>MEPHDQSGSTTRQLDEIRDRRGSQIRSVRLLPWRPFTRFPVCPSGTSPYSRGTHSQPSYVRCQNCERARQWFRAHDGPRCLHQRPDYSRLQAPPDPFQHLNSFEPILLAALSVLRPLPRDIQITIISCACDYFHSVRCASSRYLGSSRSAVKRRAARLNYCYKCGHPLYLNKPHTCRPGRLCSASISERLALLREGPIRSLTENPINARAAHFLAHELLDPR</sequence>
<proteinExistence type="predicted"/>
<evidence type="ECO:0000256" key="1">
    <source>
        <dbReference type="SAM" id="MobiDB-lite"/>
    </source>
</evidence>
<gene>
    <name type="ORF">ORF6</name>
</gene>
<comment type="function">
    <text>May act as a regulatory factor during viral transcription.</text>
</comment>
<name>VNBP_ICRSV</name>
<accession>Q9QEE6</accession>
<organismHost>
    <name type="scientific">Citrus</name>
    <dbReference type="NCBI Taxonomy" id="2706"/>
</organismHost>
<reference key="1">
    <citation type="journal article" date="2000" name="Arch. Virol.">
        <title>Indian citrus ringspot virus: a proposed new species with some affinities to potex-, carla-, fovea- and allexiviruses.</title>
        <authorList>
            <person name="Rustici G."/>
            <person name="Accotto G.P."/>
            <person name="Noris E."/>
            <person name="Masenga V."/>
            <person name="Luisoni E."/>
            <person name="Milne R.G."/>
        </authorList>
    </citation>
    <scope>NUCLEOTIDE SEQUENCE [GENOMIC RNA]</scope>
</reference>
<reference key="2">
    <citation type="journal article" date="2002" name="Arch. Virol.">
        <title>Nucleotide sequence, genome organisation and phylogenetic analysis of Indian citrus ringspot virus.</title>
        <authorList>
            <person name="Rustici G."/>
            <person name="Milne R.G."/>
            <person name="Accotto G.P."/>
        </authorList>
    </citation>
    <scope>NUCLEOTIDE SEQUENCE [GENOMIC RNA]</scope>
</reference>
<dbReference type="EMBL" id="AF184962">
    <property type="protein sequence ID" value="AAF01314.1"/>
    <property type="molecule type" value="Genomic_RNA"/>
</dbReference>
<dbReference type="EMBL" id="AF406744">
    <property type="protein sequence ID" value="AAK97527.1"/>
    <property type="molecule type" value="Genomic_RNA"/>
</dbReference>
<dbReference type="RefSeq" id="NP_203558.1">
    <property type="nucleotide sequence ID" value="NC_003093.1"/>
</dbReference>
<dbReference type="KEGG" id="vg:922107"/>
<dbReference type="Proteomes" id="UP000000394">
    <property type="component" value="Segment"/>
</dbReference>
<dbReference type="InterPro" id="IPR008891">
    <property type="entry name" value="Viral_NABP"/>
</dbReference>
<dbReference type="Pfam" id="PF05515">
    <property type="entry name" value="Viral_NABP"/>
    <property type="match status" value="1"/>
</dbReference>
<protein>
    <recommendedName>
        <fullName>23kDa protein</fullName>
    </recommendedName>
    <alternativeName>
        <fullName>Putative 23 kDa nucleic acid binding protein</fullName>
    </alternativeName>
</protein>